<gene>
    <name evidence="11" type="primary">SERA6</name>
</gene>
<reference evidence="13" key="1">
    <citation type="journal article" date="1991" name="Mol. Biochem. Parasitol.">
        <title>A new blood stage antigen of Plasmodium falciparum highly homologous to the serine-stretch protein SERP.</title>
        <authorList>
            <person name="Knapp B."/>
            <person name="Nau U."/>
            <person name="Hundt E."/>
            <person name="Kuepper H.A."/>
        </authorList>
    </citation>
    <scope>NUCLEOTIDE SEQUENCE [GENOMIC DNA]</scope>
    <scope>SUBCELLULAR LOCATION</scope>
    <scope>DEVELOPMENTAL STAGE</scope>
    <source>
        <strain evidence="13">FCBR</strain>
    </source>
</reference>
<reference evidence="11" key="2">
    <citation type="journal article" date="2012" name="J. Biol. Chem.">
        <title>Proteolytic activation of the essential parasitophorous vacuole cysteine protease SERA6 accompanies malaria parasite egress from its host erythrocyte.</title>
        <authorList>
            <person name="Ruecker A."/>
            <person name="Shea M."/>
            <person name="Hackett F."/>
            <person name="Suarez C."/>
            <person name="Hirst E.M."/>
            <person name="Milutinovic K."/>
            <person name="Withers-Martinez C."/>
            <person name="Blackman M.J."/>
        </authorList>
    </citation>
    <scope>FUNCTION</scope>
    <scope>PROTEOLYTIC CLEAVAGE</scope>
    <scope>MUTAGENESIS OF CYS-654 AND 379-ALA--GLN-380</scope>
</reference>
<reference evidence="11" key="3">
    <citation type="journal article" date="2018" name="Nat. Microbiol.">
        <title>A protease cascade regulates release of the human malaria parasite Plasmodium falciparum from host red blood cells.</title>
        <authorList>
            <person name="Thomas J.A."/>
            <person name="Tan M.S.Y."/>
            <person name="Bisson C."/>
            <person name="Borg A."/>
            <person name="Umrekar T.R."/>
            <person name="Hackett F."/>
            <person name="Hale V.L."/>
            <person name="Vizcay-Barrena G."/>
            <person name="Fleck R.A."/>
            <person name="Snijders A.P."/>
            <person name="Saibil H.R."/>
            <person name="Blackman M.J."/>
        </authorList>
    </citation>
    <scope>FUNCTION</scope>
    <scope>DEVELOPMENTAL STAGE</scope>
    <scope>DISRUPTION PHENOTYPE</scope>
    <scope>MUTAGENESIS OF CYS-654 AND 379-ALA--GLN-380</scope>
</reference>
<organism evidence="13">
    <name type="scientific">Plasmodium falciparum</name>
    <dbReference type="NCBI Taxonomy" id="5833"/>
    <lineage>
        <taxon>Eukaryota</taxon>
        <taxon>Sar</taxon>
        <taxon>Alveolata</taxon>
        <taxon>Apicomplexa</taxon>
        <taxon>Aconoidasida</taxon>
        <taxon>Haemosporida</taxon>
        <taxon>Plasmodiidae</taxon>
        <taxon>Plasmodium</taxon>
        <taxon>Plasmodium (Laverania)</taxon>
    </lineage>
</organism>
<name>SERA6_PLAFA</name>
<keyword id="KW-0325">Glycoprotein</keyword>
<keyword id="KW-0378">Hydrolase</keyword>
<keyword id="KW-0472">Membrane</keyword>
<keyword id="KW-0645">Protease</keyword>
<keyword id="KW-0732">Signal</keyword>
<keyword id="KW-0788">Thiol protease</keyword>
<keyword id="KW-0865">Zymogen</keyword>
<feature type="signal peptide" evidence="11">
    <location>
        <begin position="1"/>
        <end position="34"/>
    </location>
</feature>
<feature type="chain" id="PRO_0000450443" description="Serine-repeat antigen protein 6" evidence="3">
    <location>
        <begin position="35"/>
        <end position="1041"/>
    </location>
</feature>
<feature type="region of interest" description="Disordered" evidence="6">
    <location>
        <begin position="101"/>
        <end position="173"/>
    </location>
</feature>
<feature type="region of interest" description="Disordered" evidence="6">
    <location>
        <begin position="500"/>
        <end position="577"/>
    </location>
</feature>
<feature type="compositionally biased region" description="Low complexity" evidence="6">
    <location>
        <begin position="101"/>
        <end position="111"/>
    </location>
</feature>
<feature type="compositionally biased region" description="Polar residues" evidence="6">
    <location>
        <begin position="114"/>
        <end position="149"/>
    </location>
</feature>
<feature type="compositionally biased region" description="Low complexity" evidence="6">
    <location>
        <begin position="150"/>
        <end position="168"/>
    </location>
</feature>
<feature type="compositionally biased region" description="Low complexity" evidence="6">
    <location>
        <begin position="502"/>
        <end position="515"/>
    </location>
</feature>
<feature type="compositionally biased region" description="Basic and acidic residues" evidence="6">
    <location>
        <begin position="521"/>
        <end position="545"/>
    </location>
</feature>
<feature type="compositionally biased region" description="Low complexity" evidence="6">
    <location>
        <begin position="564"/>
        <end position="574"/>
    </location>
</feature>
<feature type="active site" evidence="5">
    <location>
        <position position="654"/>
    </location>
</feature>
<feature type="active site" evidence="1">
    <location>
        <position position="820"/>
    </location>
</feature>
<feature type="active site" evidence="1">
    <location>
        <position position="845"/>
    </location>
</feature>
<feature type="site" description="Cleavage; by SUB1" evidence="7">
    <location>
        <begin position="105"/>
        <end position="106"/>
    </location>
</feature>
<feature type="site" description="Cleavage; by SUB1" evidence="7">
    <location>
        <begin position="380"/>
        <end position="381"/>
    </location>
</feature>
<feature type="site" description="Cleavage; by SUB1" evidence="7">
    <location>
        <begin position="937"/>
        <end position="938"/>
    </location>
</feature>
<feature type="glycosylation site" description="N-linked (GlcNAc...) asparagine" evidence="4">
    <location>
        <position position="84"/>
    </location>
</feature>
<feature type="glycosylation site" description="N-linked (GlcNAc...) asparagine" evidence="4">
    <location>
        <position position="130"/>
    </location>
</feature>
<feature type="glycosylation site" description="N-linked (GlcNAc...) asparagine" evidence="4">
    <location>
        <position position="459"/>
    </location>
</feature>
<feature type="glycosylation site" description="N-linked (GlcNAc...) asparagine" evidence="4">
    <location>
        <position position="554"/>
    </location>
</feature>
<feature type="glycosylation site" description="N-linked (GlcNAc...) asparagine" evidence="4">
    <location>
        <position position="583"/>
    </location>
</feature>
<feature type="glycosylation site" description="N-linked (GlcNAc...) asparagine" evidence="4">
    <location>
        <position position="684"/>
    </location>
</feature>
<feature type="glycosylation site" description="N-linked (GlcNAc...) asparagine" evidence="4">
    <location>
        <position position="984"/>
    </location>
</feature>
<feature type="mutagenesis site" description="No viable blood stage parasites." evidence="8 9">
    <original>AQ</original>
    <variation>LL</variation>
    <location>
        <begin position="379"/>
        <end position="380"/>
    </location>
</feature>
<feature type="mutagenesis site" description="No viable blood stage parasites." evidence="8 9">
    <original>C</original>
    <variation>A</variation>
    <location>
        <position position="654"/>
    </location>
</feature>
<sequence>MIFFNFKLNRMICPIFFLYIINVLFTQYFIKCEGNKVTVISHNNGHNDNLDVNKNGVISQENVFDTSESLNLPSNKKVGSDDLNTTTISFTVPDNLENEVKVVSSSESGKGATVSHTKVTSEGLSDTQPNVTQSVSSSTHTPGSLDSTMSTEQHSSVSQSSLPTESSSETLNKATVPEIPIQINSGLLKNYNGVKVTGSCGSYFRVYLVPHILIYALTKYSVIQLESLFNDNARIDVEHKGELQNKCSEGYHFKLVVYITHNVLNLKWKTYKPNEESKSEDSDVRKYRIPKLERPFTSIQVYTANSKAGVIETKNYNIRTDIPDTCDAIATDCFLNGNVNIEKCFQCTLLVQKKDKSHECFKYVSSEMKKKMNEIKVKAQDDFNPNEYKLIESIDNILSKIYKKANKPFEISKDLINLEDLDYQFKNELLEYCKLLKKVDTSGTLEEYELGNAEDIYNNLTRLLKSHSDENIVTLQGKLRNTAICIKNVDEWILNKRGLTLPSESPSESSSKSDSYLNTFNDKDKNEDKDDMSKNSKEEFKNDDKENSDDQNNNDSNKKDDENNINNGDTNYVYDFDDDDYDNNSYEKDMYESPIKENKNGVIDLEKYGNQIKLKSPYFKNSKYCNYEYCNRWRDKTSCISQIEVEEQGNCGLCWIFASKLHFETIRCMRGYGHFRSSALYVANCSKRKPIDRCEEGSNPLEFLRILDEKKFLPLESNYPYSYTSAGNSCPKLPNSWTNLWGDTKLLFNKKVHRYIGNKGFISHETSYFKNNMDLFIDMVKREVQNKGSVIIYIKTQDVIGYDFNGKGVHSMCGDRTPDHAANIIGYGNYINKKGEKRSYWLIRNSWSYYWGDEGNFRVDMLGPKNCLYNFIHTVVFFKLDLGTIHVPKKKSWKKNVYFLRHNTDFMYSLYYNNYEPETSQDFESENDYDNAFVHGQSDESDETNKEGKNVHNSVEKKIQILHILKHIKDSQIKRGLVKYDNINETKDEHTCSRVNSQDAEKYEECKKFCLTKWNECKDHYSPGYCLTDLYKGEDCNFCYV</sequence>
<evidence type="ECO:0000250" key="1">
    <source>
        <dbReference type="UniProtKB" id="O60911"/>
    </source>
</evidence>
<evidence type="ECO:0000250" key="2">
    <source>
        <dbReference type="UniProtKB" id="Q9TY96"/>
    </source>
</evidence>
<evidence type="ECO:0000255" key="3"/>
<evidence type="ECO:0000255" key="4">
    <source>
        <dbReference type="PROSITE-ProRule" id="PRU00498"/>
    </source>
</evidence>
<evidence type="ECO:0000255" key="5">
    <source>
        <dbReference type="PROSITE-ProRule" id="PRU10088"/>
    </source>
</evidence>
<evidence type="ECO:0000256" key="6">
    <source>
        <dbReference type="SAM" id="MobiDB-lite"/>
    </source>
</evidence>
<evidence type="ECO:0000269" key="7">
    <source>
    </source>
</evidence>
<evidence type="ECO:0000269" key="8">
    <source>
    </source>
</evidence>
<evidence type="ECO:0000269" key="9">
    <source>
    </source>
</evidence>
<evidence type="ECO:0000303" key="10">
    <source>
    </source>
</evidence>
<evidence type="ECO:0000305" key="11"/>
<evidence type="ECO:0000305" key="12">
    <source>
    </source>
</evidence>
<evidence type="ECO:0000312" key="13">
    <source>
        <dbReference type="EMBL" id="AAA29764.1"/>
    </source>
</evidence>
<proteinExistence type="evidence at protein level"/>
<dbReference type="EC" id="3.4.22.-" evidence="12"/>
<dbReference type="EMBL" id="M55428">
    <property type="protein sequence ID" value="AAA29764.1"/>
    <property type="molecule type" value="Genomic_DNA"/>
</dbReference>
<dbReference type="SMR" id="Q26015"/>
<dbReference type="MEROPS" id="C01.A64"/>
<dbReference type="GlyCosmos" id="Q26015">
    <property type="glycosylation" value="7 sites, No reported glycans"/>
</dbReference>
<dbReference type="VEuPathDB" id="PlasmoDB:PF3D7_0207500"/>
<dbReference type="VEuPathDB" id="PlasmoDB:Pf7G8-2_000055500"/>
<dbReference type="VEuPathDB" id="PlasmoDB:Pf7G8_020012200"/>
<dbReference type="VEuPathDB" id="PlasmoDB:PfCD01_020012400"/>
<dbReference type="VEuPathDB" id="PlasmoDB:PfDd2_020010300"/>
<dbReference type="VEuPathDB" id="PlasmoDB:PfGA01_020010500"/>
<dbReference type="VEuPathDB" id="PlasmoDB:PfGB4_020010500"/>
<dbReference type="VEuPathDB" id="PlasmoDB:PfGN01_020012800"/>
<dbReference type="VEuPathDB" id="PlasmoDB:PfHB3_020012200"/>
<dbReference type="VEuPathDB" id="PlasmoDB:PfIT_020012200"/>
<dbReference type="VEuPathDB" id="PlasmoDB:PfKE01_020010000"/>
<dbReference type="VEuPathDB" id="PlasmoDB:PfKH01_020012700"/>
<dbReference type="VEuPathDB" id="PlasmoDB:PfKH02_020011500"/>
<dbReference type="VEuPathDB" id="PlasmoDB:PfML01_020010400"/>
<dbReference type="VEuPathDB" id="PlasmoDB:PfNF135_020013700"/>
<dbReference type="VEuPathDB" id="PlasmoDB:PfNF166_020012600"/>
<dbReference type="VEuPathDB" id="PlasmoDB:PfNF54_020012300"/>
<dbReference type="VEuPathDB" id="PlasmoDB:PfSD01_020013000"/>
<dbReference type="VEuPathDB" id="PlasmoDB:PfSN01_020010500"/>
<dbReference type="VEuPathDB" id="PlasmoDB:PfTG01_020012500"/>
<dbReference type="GO" id="GO:0016020">
    <property type="term" value="C:membrane"/>
    <property type="evidence" value="ECO:0007669"/>
    <property type="project" value="UniProtKB-KW"/>
</dbReference>
<dbReference type="GO" id="GO:0020005">
    <property type="term" value="C:symbiont-containing vacuole membrane"/>
    <property type="evidence" value="ECO:0007669"/>
    <property type="project" value="UniProtKB-SubCell"/>
</dbReference>
<dbReference type="GO" id="GO:0008234">
    <property type="term" value="F:cysteine-type peptidase activity"/>
    <property type="evidence" value="ECO:0007669"/>
    <property type="project" value="UniProtKB-KW"/>
</dbReference>
<dbReference type="GO" id="GO:0006508">
    <property type="term" value="P:proteolysis"/>
    <property type="evidence" value="ECO:0007669"/>
    <property type="project" value="UniProtKB-KW"/>
</dbReference>
<dbReference type="GO" id="GO:0141030">
    <property type="term" value="P:symbiont-mediated perturbation of host actin cytoskeleton via filamentous actin depolymerization"/>
    <property type="evidence" value="ECO:0000269"/>
    <property type="project" value="SigSci"/>
</dbReference>
<dbReference type="CDD" id="cd02619">
    <property type="entry name" value="Peptidase_C1"/>
    <property type="match status" value="1"/>
</dbReference>
<dbReference type="FunFam" id="3.90.70.10:FF:000036">
    <property type="entry name" value="Serine repeat antigen 5"/>
    <property type="match status" value="1"/>
</dbReference>
<dbReference type="Gene3D" id="3.90.70.10">
    <property type="entry name" value="Cysteine proteinases"/>
    <property type="match status" value="1"/>
</dbReference>
<dbReference type="InterPro" id="IPR038765">
    <property type="entry name" value="Papain-like_cys_pep_sf"/>
</dbReference>
<dbReference type="InterPro" id="IPR000169">
    <property type="entry name" value="Pept_cys_AS"/>
</dbReference>
<dbReference type="InterPro" id="IPR013128">
    <property type="entry name" value="Peptidase_C1A"/>
</dbReference>
<dbReference type="InterPro" id="IPR000668">
    <property type="entry name" value="Peptidase_C1A_C"/>
</dbReference>
<dbReference type="PANTHER" id="PTHR12411">
    <property type="entry name" value="CYSTEINE PROTEASE FAMILY C1-RELATED"/>
    <property type="match status" value="1"/>
</dbReference>
<dbReference type="Pfam" id="PF00112">
    <property type="entry name" value="Peptidase_C1"/>
    <property type="match status" value="1"/>
</dbReference>
<dbReference type="SMART" id="SM00645">
    <property type="entry name" value="Pept_C1"/>
    <property type="match status" value="1"/>
</dbReference>
<dbReference type="SUPFAM" id="SSF54001">
    <property type="entry name" value="Cysteine proteinases"/>
    <property type="match status" value="1"/>
</dbReference>
<dbReference type="PROSITE" id="PS00139">
    <property type="entry name" value="THIOL_PROTEASE_CYS"/>
    <property type="match status" value="1"/>
</dbReference>
<protein>
    <recommendedName>
        <fullName evidence="11">Serine-repeat antigen protein 6</fullName>
        <ecNumber evidence="12">3.4.22.-</ecNumber>
    </recommendedName>
    <alternativeName>
        <fullName evidence="11">Cysteine protease SERA6</fullName>
    </alternativeName>
    <alternativeName>
        <fullName evidence="10">SERP H</fullName>
    </alternativeName>
</protein>
<comment type="function">
    <text evidence="8 9">Cysteine protease which plays an essential role in merozoite egress from host erythrocytes (PubMed:22984267, PubMed:29459732). May cleave host SPTB/beta spectrin and ANK1/ankyrin-1 which disrupts host erythrocyte actin cytoskeleton and leads to host erythrocyte cell membrane rupture (PubMed:29459732).</text>
</comment>
<comment type="subcellular location">
    <subcellularLocation>
        <location evidence="2">Parasitophorous vacuole lumen</location>
    </subcellularLocation>
    <subcellularLocation>
        <location evidence="2">Parasitophorous vacuole membrane</location>
        <topology evidence="11">Peripheral membrane protein</topology>
    </subcellularLocation>
</comment>
<comment type="developmental stage">
    <text evidence="9">Expressed during parasite asexual blood stages, specifically at the schizont stage (at protein level).</text>
</comment>
<comment type="PTM">
    <text evidence="2">Just prior to merozoite egress from host erythrocytes, proteolytically cleaved by SUB1 to generate the active 75kDa form.</text>
</comment>
<comment type="disruption phenotype">
    <text evidence="9">Blood stage parasites are not viable (PubMed:29459732). Initial schizont development is normal but merozoite egress is abolished due to a failure to rupture the host erythrocyte membrane (PubMed:29459732). Does not affect poration of the host erythrocyte membrane which precedes erythrocyte membrane rupture (PubMed:29459732). Cleavage of host erythrocyte SPTB/beta spectrin and ANK1/ankyrin-1 is impaired (PubMed:29459732).</text>
</comment>
<comment type="similarity">
    <text evidence="3">Belongs to the peptidase C1 family.</text>
</comment>
<accession>Q26015</accession>